<reference key="1">
    <citation type="journal article" date="2002" name="Nature">
        <title>Genome sequence of the plant pathogen Ralstonia solanacearum.</title>
        <authorList>
            <person name="Salanoubat M."/>
            <person name="Genin S."/>
            <person name="Artiguenave F."/>
            <person name="Gouzy J."/>
            <person name="Mangenot S."/>
            <person name="Arlat M."/>
            <person name="Billault A."/>
            <person name="Brottier P."/>
            <person name="Camus J.-C."/>
            <person name="Cattolico L."/>
            <person name="Chandler M."/>
            <person name="Choisne N."/>
            <person name="Claudel-Renard C."/>
            <person name="Cunnac S."/>
            <person name="Demange N."/>
            <person name="Gaspin C."/>
            <person name="Lavie M."/>
            <person name="Moisan A."/>
            <person name="Robert C."/>
            <person name="Saurin W."/>
            <person name="Schiex T."/>
            <person name="Siguier P."/>
            <person name="Thebault P."/>
            <person name="Whalen M."/>
            <person name="Wincker P."/>
            <person name="Levy M."/>
            <person name="Weissenbach J."/>
            <person name="Boucher C.A."/>
        </authorList>
    </citation>
    <scope>NUCLEOTIDE SEQUENCE [LARGE SCALE GENOMIC DNA]</scope>
    <source>
        <strain>ATCC BAA-1114 / GMI1000</strain>
    </source>
</reference>
<comment type="function">
    <text evidence="1">This protein specifically catalyzes the removal of signal peptides from prolipoproteins.</text>
</comment>
<comment type="catalytic activity">
    <reaction evidence="1">
        <text>Release of signal peptides from bacterial membrane prolipoproteins. Hydrolyzes -Xaa-Yaa-Zaa-|-(S,diacylglyceryl)Cys-, in which Xaa is hydrophobic (preferably Leu), and Yaa (Ala or Ser) and Zaa (Gly or Ala) have small, neutral side chains.</text>
        <dbReference type="EC" id="3.4.23.36"/>
    </reaction>
</comment>
<comment type="pathway">
    <text evidence="1">Protein modification; lipoprotein biosynthesis (signal peptide cleavage).</text>
</comment>
<comment type="subcellular location">
    <subcellularLocation>
        <location evidence="1">Cell inner membrane</location>
        <topology evidence="1">Multi-pass membrane protein</topology>
    </subcellularLocation>
</comment>
<comment type="similarity">
    <text evidence="1">Belongs to the peptidase A8 family.</text>
</comment>
<evidence type="ECO:0000255" key="1">
    <source>
        <dbReference type="HAMAP-Rule" id="MF_00161"/>
    </source>
</evidence>
<accession>Q8XWL5</accession>
<name>LSPA_RALN1</name>
<sequence>MATRNNGKSKAAGSKSGGGHGVGPWLGLGVIWILLDQLTKIAILKTFAYGESRPITGFFNLVLAYNRGAAFSFLAAAGGWQRWFFTGLGVAAALFIVWLLKRHSGQKLFCFALALILGGALGNVIDRLVYGHVVDFLDFHLRGYHWPAFNVADCGICIGAVLLIIDELRRVRR</sequence>
<gene>
    <name evidence="1" type="primary">lspA</name>
    <name type="ordered locus">RSc2459</name>
</gene>
<proteinExistence type="inferred from homology"/>
<organism>
    <name type="scientific">Ralstonia nicotianae (strain ATCC BAA-1114 / GMI1000)</name>
    <name type="common">Ralstonia solanacearum</name>
    <dbReference type="NCBI Taxonomy" id="267608"/>
    <lineage>
        <taxon>Bacteria</taxon>
        <taxon>Pseudomonadati</taxon>
        <taxon>Pseudomonadota</taxon>
        <taxon>Betaproteobacteria</taxon>
        <taxon>Burkholderiales</taxon>
        <taxon>Burkholderiaceae</taxon>
        <taxon>Ralstonia</taxon>
        <taxon>Ralstonia solanacearum species complex</taxon>
    </lineage>
</organism>
<protein>
    <recommendedName>
        <fullName evidence="1">Lipoprotein signal peptidase</fullName>
        <ecNumber evidence="1">3.4.23.36</ecNumber>
    </recommendedName>
    <alternativeName>
        <fullName evidence="1">Prolipoprotein signal peptidase</fullName>
    </alternativeName>
    <alternativeName>
        <fullName evidence="1">Signal peptidase II</fullName>
        <shortName evidence="1">SPase II</shortName>
    </alternativeName>
</protein>
<keyword id="KW-0064">Aspartyl protease</keyword>
<keyword id="KW-0997">Cell inner membrane</keyword>
<keyword id="KW-1003">Cell membrane</keyword>
<keyword id="KW-0378">Hydrolase</keyword>
<keyword id="KW-0472">Membrane</keyword>
<keyword id="KW-0645">Protease</keyword>
<keyword id="KW-1185">Reference proteome</keyword>
<keyword id="KW-0812">Transmembrane</keyword>
<keyword id="KW-1133">Transmembrane helix</keyword>
<feature type="chain" id="PRO_0000289413" description="Lipoprotein signal peptidase">
    <location>
        <begin position="1"/>
        <end position="173"/>
    </location>
</feature>
<feature type="transmembrane region" description="Helical" evidence="1">
    <location>
        <begin position="24"/>
        <end position="44"/>
    </location>
</feature>
<feature type="transmembrane region" description="Helical" evidence="1">
    <location>
        <begin position="55"/>
        <end position="75"/>
    </location>
</feature>
<feature type="transmembrane region" description="Helical" evidence="1">
    <location>
        <begin position="80"/>
        <end position="100"/>
    </location>
</feature>
<feature type="transmembrane region" description="Helical" evidence="1">
    <location>
        <begin position="105"/>
        <end position="125"/>
    </location>
</feature>
<feature type="transmembrane region" description="Helical" evidence="1">
    <location>
        <begin position="145"/>
        <end position="165"/>
    </location>
</feature>
<feature type="active site" evidence="1">
    <location>
        <position position="135"/>
    </location>
</feature>
<feature type="active site" evidence="1">
    <location>
        <position position="153"/>
    </location>
</feature>
<dbReference type="EC" id="3.4.23.36" evidence="1"/>
<dbReference type="EMBL" id="AL646052">
    <property type="protein sequence ID" value="CAD16166.1"/>
    <property type="molecule type" value="Genomic_DNA"/>
</dbReference>
<dbReference type="RefSeq" id="WP_011002376.1">
    <property type="nucleotide sequence ID" value="NC_003295.1"/>
</dbReference>
<dbReference type="SMR" id="Q8XWL5"/>
<dbReference type="STRING" id="267608.RSc2459"/>
<dbReference type="EnsemblBacteria" id="CAD16166">
    <property type="protein sequence ID" value="CAD16166"/>
    <property type="gene ID" value="RSc2459"/>
</dbReference>
<dbReference type="KEGG" id="rso:RSc2459"/>
<dbReference type="eggNOG" id="COG0597">
    <property type="taxonomic scope" value="Bacteria"/>
</dbReference>
<dbReference type="HOGENOM" id="CLU_083252_4_0_4"/>
<dbReference type="UniPathway" id="UPA00665"/>
<dbReference type="Proteomes" id="UP000001436">
    <property type="component" value="Chromosome"/>
</dbReference>
<dbReference type="GO" id="GO:0005886">
    <property type="term" value="C:plasma membrane"/>
    <property type="evidence" value="ECO:0007669"/>
    <property type="project" value="UniProtKB-SubCell"/>
</dbReference>
<dbReference type="GO" id="GO:0004190">
    <property type="term" value="F:aspartic-type endopeptidase activity"/>
    <property type="evidence" value="ECO:0007669"/>
    <property type="project" value="UniProtKB-UniRule"/>
</dbReference>
<dbReference type="GO" id="GO:0006508">
    <property type="term" value="P:proteolysis"/>
    <property type="evidence" value="ECO:0007669"/>
    <property type="project" value="UniProtKB-KW"/>
</dbReference>
<dbReference type="HAMAP" id="MF_00161">
    <property type="entry name" value="LspA"/>
    <property type="match status" value="1"/>
</dbReference>
<dbReference type="InterPro" id="IPR001872">
    <property type="entry name" value="Peptidase_A8"/>
</dbReference>
<dbReference type="NCBIfam" id="TIGR00077">
    <property type="entry name" value="lspA"/>
    <property type="match status" value="1"/>
</dbReference>
<dbReference type="PANTHER" id="PTHR33695">
    <property type="entry name" value="LIPOPROTEIN SIGNAL PEPTIDASE"/>
    <property type="match status" value="1"/>
</dbReference>
<dbReference type="PANTHER" id="PTHR33695:SF1">
    <property type="entry name" value="LIPOPROTEIN SIGNAL PEPTIDASE"/>
    <property type="match status" value="1"/>
</dbReference>
<dbReference type="Pfam" id="PF01252">
    <property type="entry name" value="Peptidase_A8"/>
    <property type="match status" value="1"/>
</dbReference>
<dbReference type="PRINTS" id="PR00781">
    <property type="entry name" value="LIPOSIGPTASE"/>
</dbReference>
<dbReference type="PROSITE" id="PS00855">
    <property type="entry name" value="SPASE_II"/>
    <property type="match status" value="1"/>
</dbReference>